<dbReference type="EC" id="2.3.1.181" evidence="1"/>
<dbReference type="EMBL" id="CP000746">
    <property type="protein sequence ID" value="ABR74075.1"/>
    <property type="molecule type" value="Genomic_DNA"/>
</dbReference>
<dbReference type="RefSeq" id="WP_012072455.1">
    <property type="nucleotide sequence ID" value="NC_009655.1"/>
</dbReference>
<dbReference type="SMR" id="A6VM78"/>
<dbReference type="STRING" id="339671.Asuc_0702"/>
<dbReference type="KEGG" id="asu:Asuc_0702"/>
<dbReference type="eggNOG" id="COG0321">
    <property type="taxonomic scope" value="Bacteria"/>
</dbReference>
<dbReference type="HOGENOM" id="CLU_035168_3_1_6"/>
<dbReference type="OrthoDB" id="9787061at2"/>
<dbReference type="UniPathway" id="UPA00538">
    <property type="reaction ID" value="UER00592"/>
</dbReference>
<dbReference type="Proteomes" id="UP000001114">
    <property type="component" value="Chromosome"/>
</dbReference>
<dbReference type="GO" id="GO:0005737">
    <property type="term" value="C:cytoplasm"/>
    <property type="evidence" value="ECO:0007669"/>
    <property type="project" value="UniProtKB-SubCell"/>
</dbReference>
<dbReference type="GO" id="GO:0033819">
    <property type="term" value="F:lipoyl(octanoyl) transferase activity"/>
    <property type="evidence" value="ECO:0007669"/>
    <property type="project" value="UniProtKB-EC"/>
</dbReference>
<dbReference type="GO" id="GO:0036211">
    <property type="term" value="P:protein modification process"/>
    <property type="evidence" value="ECO:0007669"/>
    <property type="project" value="InterPro"/>
</dbReference>
<dbReference type="CDD" id="cd16444">
    <property type="entry name" value="LipB"/>
    <property type="match status" value="1"/>
</dbReference>
<dbReference type="FunFam" id="3.30.930.10:FF:000020">
    <property type="entry name" value="Octanoyltransferase"/>
    <property type="match status" value="1"/>
</dbReference>
<dbReference type="Gene3D" id="3.30.930.10">
    <property type="entry name" value="Bira Bifunctional Protein, Domain 2"/>
    <property type="match status" value="1"/>
</dbReference>
<dbReference type="HAMAP" id="MF_00013">
    <property type="entry name" value="LipB"/>
    <property type="match status" value="1"/>
</dbReference>
<dbReference type="InterPro" id="IPR045864">
    <property type="entry name" value="aa-tRNA-synth_II/BPL/LPL"/>
</dbReference>
<dbReference type="InterPro" id="IPR004143">
    <property type="entry name" value="BPL_LPL_catalytic"/>
</dbReference>
<dbReference type="InterPro" id="IPR000544">
    <property type="entry name" value="Octanoyltransferase"/>
</dbReference>
<dbReference type="InterPro" id="IPR020605">
    <property type="entry name" value="Octanoyltransferase_CS"/>
</dbReference>
<dbReference type="NCBIfam" id="TIGR00214">
    <property type="entry name" value="lipB"/>
    <property type="match status" value="1"/>
</dbReference>
<dbReference type="NCBIfam" id="NF010922">
    <property type="entry name" value="PRK14342.1"/>
    <property type="match status" value="1"/>
</dbReference>
<dbReference type="PANTHER" id="PTHR10993:SF7">
    <property type="entry name" value="LIPOYLTRANSFERASE 2, MITOCHONDRIAL-RELATED"/>
    <property type="match status" value="1"/>
</dbReference>
<dbReference type="PANTHER" id="PTHR10993">
    <property type="entry name" value="OCTANOYLTRANSFERASE"/>
    <property type="match status" value="1"/>
</dbReference>
<dbReference type="Pfam" id="PF21948">
    <property type="entry name" value="LplA-B_cat"/>
    <property type="match status" value="1"/>
</dbReference>
<dbReference type="PIRSF" id="PIRSF016262">
    <property type="entry name" value="LPLase"/>
    <property type="match status" value="1"/>
</dbReference>
<dbReference type="SUPFAM" id="SSF55681">
    <property type="entry name" value="Class II aaRS and biotin synthetases"/>
    <property type="match status" value="1"/>
</dbReference>
<dbReference type="PROSITE" id="PS51733">
    <property type="entry name" value="BPL_LPL_CATALYTIC"/>
    <property type="match status" value="1"/>
</dbReference>
<dbReference type="PROSITE" id="PS01313">
    <property type="entry name" value="LIPB"/>
    <property type="match status" value="1"/>
</dbReference>
<proteinExistence type="inferred from homology"/>
<reference key="1">
    <citation type="journal article" date="2010" name="BMC Genomics">
        <title>A genomic perspective on the potential of Actinobacillus succinogenes for industrial succinate production.</title>
        <authorList>
            <person name="McKinlay J.B."/>
            <person name="Laivenieks M."/>
            <person name="Schindler B.D."/>
            <person name="McKinlay A.A."/>
            <person name="Siddaramappa S."/>
            <person name="Challacombe J.F."/>
            <person name="Lowry S.R."/>
            <person name="Clum A."/>
            <person name="Lapidus A.L."/>
            <person name="Burkhart K.B."/>
            <person name="Harkins V."/>
            <person name="Vieille C."/>
        </authorList>
    </citation>
    <scope>NUCLEOTIDE SEQUENCE [LARGE SCALE GENOMIC DNA]</scope>
    <source>
        <strain>ATCC 55618 / DSM 22257 / CCUG 43843 / 130Z</strain>
    </source>
</reference>
<organism>
    <name type="scientific">Actinobacillus succinogenes (strain ATCC 55618 / DSM 22257 / CCUG 43843 / 130Z)</name>
    <dbReference type="NCBI Taxonomy" id="339671"/>
    <lineage>
        <taxon>Bacteria</taxon>
        <taxon>Pseudomonadati</taxon>
        <taxon>Pseudomonadota</taxon>
        <taxon>Gammaproteobacteria</taxon>
        <taxon>Pasteurellales</taxon>
        <taxon>Pasteurellaceae</taxon>
        <taxon>Actinobacillus</taxon>
    </lineage>
</organism>
<evidence type="ECO:0000255" key="1">
    <source>
        <dbReference type="HAMAP-Rule" id="MF_00013"/>
    </source>
</evidence>
<evidence type="ECO:0000255" key="2">
    <source>
        <dbReference type="PROSITE-ProRule" id="PRU01067"/>
    </source>
</evidence>
<protein>
    <recommendedName>
        <fullName evidence="1">Octanoyltransferase</fullName>
        <ecNumber evidence="1">2.3.1.181</ecNumber>
    </recommendedName>
    <alternativeName>
        <fullName evidence="1">Lipoate-protein ligase B</fullName>
    </alternativeName>
    <alternativeName>
        <fullName evidence="1">Lipoyl/octanoyl transferase</fullName>
    </alternativeName>
    <alternativeName>
        <fullName evidence="1">Octanoyl-[acyl-carrier-protein]-protein N-octanoyltransferase</fullName>
    </alternativeName>
</protein>
<sequence length="220" mass="24489">MNIPLVVRRLGVQDYNQVWRQMQDFTDQRNENTPDEIWLVQHPPVFTQGQAGKPEHLLNPGAIPVVRSDRGGQITYHGPGQQIMYVLIDIKRGKAYGRDISVRQLVSALEQSVVKTLAGYGVNAYPKAEAPGVYVNTDGQEKKICSLGLRIRHGCSFHGLALNINMDLTPFHHINPCGYAGLEMCQLADFVENGEADCDEVSPKLVTHFAEILGYNATKF</sequence>
<accession>A6VM78</accession>
<gene>
    <name evidence="1" type="primary">lipB</name>
    <name type="ordered locus">Asuc_0702</name>
</gene>
<comment type="function">
    <text evidence="1">Catalyzes the transfer of endogenously produced octanoic acid from octanoyl-acyl-carrier-protein onto the lipoyl domains of lipoate-dependent enzymes. Lipoyl-ACP can also act as a substrate although octanoyl-ACP is likely to be the physiological substrate.</text>
</comment>
<comment type="catalytic activity">
    <reaction evidence="1">
        <text>octanoyl-[ACP] + L-lysyl-[protein] = N(6)-octanoyl-L-lysyl-[protein] + holo-[ACP] + H(+)</text>
        <dbReference type="Rhea" id="RHEA:17665"/>
        <dbReference type="Rhea" id="RHEA-COMP:9636"/>
        <dbReference type="Rhea" id="RHEA-COMP:9685"/>
        <dbReference type="Rhea" id="RHEA-COMP:9752"/>
        <dbReference type="Rhea" id="RHEA-COMP:9928"/>
        <dbReference type="ChEBI" id="CHEBI:15378"/>
        <dbReference type="ChEBI" id="CHEBI:29969"/>
        <dbReference type="ChEBI" id="CHEBI:64479"/>
        <dbReference type="ChEBI" id="CHEBI:78463"/>
        <dbReference type="ChEBI" id="CHEBI:78809"/>
        <dbReference type="EC" id="2.3.1.181"/>
    </reaction>
</comment>
<comment type="pathway">
    <text evidence="1">Protein modification; protein lipoylation via endogenous pathway; protein N(6)-(lipoyl)lysine from octanoyl-[acyl-carrier-protein]: step 1/2.</text>
</comment>
<comment type="subcellular location">
    <subcellularLocation>
        <location evidence="1">Cytoplasm</location>
    </subcellularLocation>
</comment>
<comment type="miscellaneous">
    <text evidence="1">In the reaction, the free carboxyl group of octanoic acid is attached via an amide linkage to the epsilon-amino group of a specific lysine residue of lipoyl domains of lipoate-dependent enzymes.</text>
</comment>
<comment type="similarity">
    <text evidence="1">Belongs to the LipB family.</text>
</comment>
<name>LIPB_ACTSZ</name>
<keyword id="KW-0012">Acyltransferase</keyword>
<keyword id="KW-0963">Cytoplasm</keyword>
<keyword id="KW-1185">Reference proteome</keyword>
<keyword id="KW-0808">Transferase</keyword>
<feature type="chain" id="PRO_1000070955" description="Octanoyltransferase">
    <location>
        <begin position="1"/>
        <end position="220"/>
    </location>
</feature>
<feature type="domain" description="BPL/LPL catalytic" evidence="2">
    <location>
        <begin position="31"/>
        <end position="217"/>
    </location>
</feature>
<feature type="active site" description="Acyl-thioester intermediate" evidence="1">
    <location>
        <position position="177"/>
    </location>
</feature>
<feature type="binding site" evidence="1">
    <location>
        <begin position="70"/>
        <end position="77"/>
    </location>
    <ligand>
        <name>substrate</name>
    </ligand>
</feature>
<feature type="binding site" evidence="1">
    <location>
        <begin position="146"/>
        <end position="148"/>
    </location>
    <ligand>
        <name>substrate</name>
    </ligand>
</feature>
<feature type="binding site" evidence="1">
    <location>
        <begin position="159"/>
        <end position="161"/>
    </location>
    <ligand>
        <name>substrate</name>
    </ligand>
</feature>
<feature type="site" description="Lowers pKa of active site Cys" evidence="1">
    <location>
        <position position="143"/>
    </location>
</feature>